<proteinExistence type="evidence at protein level"/>
<feature type="chain" id="PRO_0000050180" description="Paired box protein Pax-4">
    <location>
        <begin position="1"/>
        <end position="350"/>
    </location>
</feature>
<feature type="DNA-binding region" description="Paired" evidence="2">
    <location>
        <begin position="5"/>
        <end position="131"/>
    </location>
</feature>
<feature type="DNA-binding region" description="Homeobox" evidence="1">
    <location>
        <begin position="170"/>
        <end position="229"/>
    </location>
</feature>
<feature type="region of interest" description="PAI subdomain" evidence="2">
    <location>
        <begin position="8"/>
        <end position="64"/>
    </location>
</feature>
<feature type="region of interest" description="RED subdomain" evidence="2">
    <location>
        <begin position="83"/>
        <end position="131"/>
    </location>
</feature>
<feature type="region of interest" description="Disordered" evidence="3">
    <location>
        <begin position="153"/>
        <end position="172"/>
    </location>
</feature>
<feature type="region of interest" description="Transcription repression">
    <location>
        <begin position="278"/>
        <end position="350"/>
    </location>
</feature>
<feature type="splice variant" id="VSP_036448" description="In isoform 3." evidence="8 9">
    <location>
        <begin position="1"/>
        <end position="8"/>
    </location>
</feature>
<feature type="splice variant" id="VSP_002359" description="In isoform 2." evidence="10">
    <location>
        <begin position="239"/>
        <end position="257"/>
    </location>
</feature>
<feature type="splice variant" id="VSP_002360" description="In isoform 2." evidence="10">
    <original>QSPGSVPTAALPALEPLGPSCYQLCWATAPERCLSDTPPKACLKPCWDCGSFLLPVIAPSCVDVAWPCLDASLAHHLIGGAGKATPTHFSHWP</original>
    <variation>AVPWQCAHSSPACPGTTGSLLLSAVLGNSTRKVSE</variation>
    <location>
        <begin position="258"/>
        <end position="350"/>
    </location>
</feature>
<feature type="splice variant" id="VSP_036449" description="In isoform 3." evidence="8 9">
    <original>DCGSFLLPVIAPSCVDVAWPCLDASLAHHLIGGAGKATPTHFSHWP</original>
    <variation>GHLPPQPNSLDSGLLCLPCPSSHCHLASLSGSQALLWPGCPLLYGLE</variation>
    <location>
        <begin position="305"/>
        <end position="350"/>
    </location>
</feature>
<feature type="sequence variant" id="VAR_054879" description="In dbSNP:rs115887120." evidence="7">
    <original>R</original>
    <variation>Q</variation>
    <location>
        <position position="39"/>
    </location>
</feature>
<feature type="sequence variant" id="VAR_054880" description="In KPD; uncertain significance; dbSNP:rs35155575." evidence="5">
    <original>R</original>
    <variation>W</variation>
    <location>
        <position position="45"/>
    </location>
</feature>
<feature type="sequence variant" id="VAR_054881" description="In T2D; uncertain significance; dbSNP:rs114202595." evidence="4">
    <original>R</original>
    <variation>W</variation>
    <location>
        <position position="129"/>
    </location>
</feature>
<feature type="sequence variant" id="VAR_054882" description="In KPD; uncertain significance; dbSNP:rs2233578." evidence="5">
    <original>R</original>
    <variation>W</variation>
    <location>
        <position position="141"/>
    </location>
</feature>
<feature type="sequence variant" id="VAR_054883" description="In MODY9; the mutant sequence represses the activity of the insulin and glucagon promoters by only 35% compared to 50% and 57% respectively with wild-type sequence." evidence="7">
    <original>R</original>
    <variation>W</variation>
    <location>
        <position position="172"/>
    </location>
</feature>
<feature type="sequence variant" id="VAR_054884" description="In dbSNP:rs114315130." evidence="7">
    <original>R</original>
    <variation>C</variation>
    <location>
        <position position="191"/>
    </location>
</feature>
<feature type="sequence variant" id="VAR_054885" description="In dbSNP:rs2233580." evidence="7">
    <original>R</original>
    <variation>H</variation>
    <location>
        <position position="200"/>
    </location>
</feature>
<feature type="sequence variant" id="VAR_054886" description="In dbSNP:rs3824004." evidence="7">
    <original>R</original>
    <variation>S</variation>
    <location>
        <position position="200"/>
    </location>
</feature>
<feature type="sequence variant" id="VAR_082834" description="In dbSNP:rs712701." evidence="6 7">
    <original>H</original>
    <variation>P</variation>
    <location sequence="O43316-4">
        <position position="321"/>
    </location>
</feature>
<organism>
    <name type="scientific">Homo sapiens</name>
    <name type="common">Human</name>
    <dbReference type="NCBI Taxonomy" id="9606"/>
    <lineage>
        <taxon>Eukaryota</taxon>
        <taxon>Metazoa</taxon>
        <taxon>Chordata</taxon>
        <taxon>Craniata</taxon>
        <taxon>Vertebrata</taxon>
        <taxon>Euteleostomi</taxon>
        <taxon>Mammalia</taxon>
        <taxon>Eutheria</taxon>
        <taxon>Euarchontoglires</taxon>
        <taxon>Primates</taxon>
        <taxon>Haplorrhini</taxon>
        <taxon>Catarrhini</taxon>
        <taxon>Hominidae</taxon>
        <taxon>Homo</taxon>
    </lineage>
</organism>
<keyword id="KW-0025">Alternative splicing</keyword>
<keyword id="KW-0217">Developmental protein</keyword>
<keyword id="KW-0219">Diabetes mellitus</keyword>
<keyword id="KW-0221">Differentiation</keyword>
<keyword id="KW-0225">Disease variant</keyword>
<keyword id="KW-0238">DNA-binding</keyword>
<keyword id="KW-0371">Homeobox</keyword>
<keyword id="KW-0539">Nucleus</keyword>
<keyword id="KW-0563">Paired box</keyword>
<keyword id="KW-1185">Reference proteome</keyword>
<keyword id="KW-0678">Repressor</keyword>
<keyword id="KW-0804">Transcription</keyword>
<keyword id="KW-0805">Transcription regulation</keyword>
<evidence type="ECO:0000255" key="1">
    <source>
        <dbReference type="PROSITE-ProRule" id="PRU00108"/>
    </source>
</evidence>
<evidence type="ECO:0000255" key="2">
    <source>
        <dbReference type="PROSITE-ProRule" id="PRU00381"/>
    </source>
</evidence>
<evidence type="ECO:0000256" key="3">
    <source>
        <dbReference type="SAM" id="MobiDB-lite"/>
    </source>
</evidence>
<evidence type="ECO:0000269" key="4">
    <source>
    </source>
</evidence>
<evidence type="ECO:0000269" key="5">
    <source>
    </source>
</evidence>
<evidence type="ECO:0000269" key="6">
    <source>
    </source>
</evidence>
<evidence type="ECO:0000269" key="7">
    <source>
    </source>
</evidence>
<evidence type="ECO:0000303" key="8">
    <source>
    </source>
</evidence>
<evidence type="ECO:0000303" key="9">
    <source>
    </source>
</evidence>
<evidence type="ECO:0000305" key="10"/>
<reference key="1">
    <citation type="journal article" date="1998" name="Biochem. Biophys. Res. Commun.">
        <title>Molecular cloning of mouse paired-box-containing gene (Pax-4) from an islet beta cell line and deduced sequence of human Pax-4.</title>
        <authorList>
            <person name="Matsushita T."/>
            <person name="Yamaoka T."/>
            <person name="Otsuka S."/>
            <person name="Moritani M."/>
            <person name="Matsumoto T."/>
            <person name="Itakura M."/>
        </authorList>
    </citation>
    <scope>NUCLEOTIDE SEQUENCE [MRNA] (ISOFORM 1)</scope>
</reference>
<reference key="2">
    <citation type="journal article" date="1998" name="Diabetes">
        <title>Isolation and characterization of the human PAX4 gene.</title>
        <authorList>
            <person name="Tao T."/>
            <person name="Wasson J."/>
            <person name="Bernal-Mizrachi E."/>
            <person name="Behn P.S."/>
            <person name="Chayen S."/>
            <person name="Duprat L."/>
            <person name="Meyer J."/>
            <person name="Glaser B."/>
            <person name="Permutt M.A."/>
        </authorList>
    </citation>
    <scope>NUCLEOTIDE SEQUENCE [MRNA] (ISOFORM 3)</scope>
    <source>
        <tissue>Placenta</tissue>
    </source>
</reference>
<reference key="3">
    <citation type="journal article" date="2003" name="Nature">
        <title>The DNA sequence of human chromosome 7.</title>
        <authorList>
            <person name="Hillier L.W."/>
            <person name="Fulton R.S."/>
            <person name="Fulton L.A."/>
            <person name="Graves T.A."/>
            <person name="Pepin K.H."/>
            <person name="Wagner-McPherson C."/>
            <person name="Layman D."/>
            <person name="Maas J."/>
            <person name="Jaeger S."/>
            <person name="Walker R."/>
            <person name="Wylie K."/>
            <person name="Sekhon M."/>
            <person name="Becker M.C."/>
            <person name="O'Laughlin M.D."/>
            <person name="Schaller M.E."/>
            <person name="Fewell G.A."/>
            <person name="Delehaunty K.D."/>
            <person name="Miner T.L."/>
            <person name="Nash W.E."/>
            <person name="Cordes M."/>
            <person name="Du H."/>
            <person name="Sun H."/>
            <person name="Edwards J."/>
            <person name="Bradshaw-Cordum H."/>
            <person name="Ali J."/>
            <person name="Andrews S."/>
            <person name="Isak A."/>
            <person name="Vanbrunt A."/>
            <person name="Nguyen C."/>
            <person name="Du F."/>
            <person name="Lamar B."/>
            <person name="Courtney L."/>
            <person name="Kalicki J."/>
            <person name="Ozersky P."/>
            <person name="Bielicki L."/>
            <person name="Scott K."/>
            <person name="Holmes A."/>
            <person name="Harkins R."/>
            <person name="Harris A."/>
            <person name="Strong C.M."/>
            <person name="Hou S."/>
            <person name="Tomlinson C."/>
            <person name="Dauphin-Kohlberg S."/>
            <person name="Kozlowicz-Reilly A."/>
            <person name="Leonard S."/>
            <person name="Rohlfing T."/>
            <person name="Rock S.M."/>
            <person name="Tin-Wollam A.-M."/>
            <person name="Abbott A."/>
            <person name="Minx P."/>
            <person name="Maupin R."/>
            <person name="Strowmatt C."/>
            <person name="Latreille P."/>
            <person name="Miller N."/>
            <person name="Johnson D."/>
            <person name="Murray J."/>
            <person name="Woessner J.P."/>
            <person name="Wendl M.C."/>
            <person name="Yang S.-P."/>
            <person name="Schultz B.R."/>
            <person name="Wallis J.W."/>
            <person name="Spieth J."/>
            <person name="Bieri T.A."/>
            <person name="Nelson J.O."/>
            <person name="Berkowicz N."/>
            <person name="Wohldmann P.E."/>
            <person name="Cook L.L."/>
            <person name="Hickenbotham M.T."/>
            <person name="Eldred J."/>
            <person name="Williams D."/>
            <person name="Bedell J.A."/>
            <person name="Mardis E.R."/>
            <person name="Clifton S.W."/>
            <person name="Chissoe S.L."/>
            <person name="Marra M.A."/>
            <person name="Raymond C."/>
            <person name="Haugen E."/>
            <person name="Gillett W."/>
            <person name="Zhou Y."/>
            <person name="James R."/>
            <person name="Phelps K."/>
            <person name="Iadanoto S."/>
            <person name="Bubb K."/>
            <person name="Simms E."/>
            <person name="Levy R."/>
            <person name="Clendenning J."/>
            <person name="Kaul R."/>
            <person name="Kent W.J."/>
            <person name="Furey T.S."/>
            <person name="Baertsch R.A."/>
            <person name="Brent M.R."/>
            <person name="Keibler E."/>
            <person name="Flicek P."/>
            <person name="Bork P."/>
            <person name="Suyama M."/>
            <person name="Bailey J.A."/>
            <person name="Portnoy M.E."/>
            <person name="Torrents D."/>
            <person name="Chinwalla A.T."/>
            <person name="Gish W.R."/>
            <person name="Eddy S.R."/>
            <person name="McPherson J.D."/>
            <person name="Olson M.V."/>
            <person name="Eichler E.E."/>
            <person name="Green E.D."/>
            <person name="Waterston R.H."/>
            <person name="Wilson R.K."/>
        </authorList>
    </citation>
    <scope>NUCLEOTIDE SEQUENCE [LARGE SCALE GENOMIC DNA]</scope>
</reference>
<reference key="4">
    <citation type="journal article" date="2004" name="Genome Res.">
        <title>The status, quality, and expansion of the NIH full-length cDNA project: the Mammalian Gene Collection (MGC).</title>
        <authorList>
            <consortium name="The MGC Project Team"/>
        </authorList>
    </citation>
    <scope>NUCLEOTIDE SEQUENCE [LARGE SCALE MRNA] (ISOFORM 3)</scope>
    <source>
        <tissue>Colon</tissue>
    </source>
</reference>
<reference key="5">
    <citation type="journal article" date="2001" name="Biochem. Biophys. Res. Commun.">
        <title>Expression of dominant negative form of PAX4 in human insulinoma.</title>
        <authorList>
            <person name="Miyamoto T."/>
            <person name="Kakizawa T."/>
            <person name="Ichikawa K."/>
            <person name="Nishio S."/>
            <person name="Kajikawa S."/>
            <person name="Hashizume K."/>
        </authorList>
    </citation>
    <scope>ALTERNATIVE SPLICING (ISOFORM 2)</scope>
    <source>
        <tissue>Insulinoma</tissue>
    </source>
</reference>
<reference key="6">
    <citation type="journal article" date="2001" name="Diabetes">
        <title>A missense mutation of Pax4 gene (R121W) is associated with type 2 diabetes in Japanese.</title>
        <authorList>
            <person name="Shimajiri Y."/>
            <person name="Sanke T."/>
            <person name="Furuta H."/>
            <person name="Hanabusa T."/>
            <person name="Nakagawa T."/>
            <person name="Fujitani Y."/>
            <person name="Kajimoto Y."/>
            <person name="Takasu N."/>
            <person name="Nanjo K."/>
        </authorList>
    </citation>
    <scope>VARIANT T2D TRP-129</scope>
</reference>
<reference key="7">
    <citation type="journal article" date="2004" name="Hum. Mol. Genet.">
        <title>PAX4 gene variations predispose to ketosis-prone diabetes.</title>
        <authorList>
            <person name="Mauvais-Jarvis F."/>
            <person name="Smith S.B."/>
            <person name="Le May C."/>
            <person name="Leal S.M."/>
            <person name="Gautier J.-F."/>
            <person name="Molokhia M."/>
            <person name="Riveline J.-P."/>
            <person name="Rajan A.S."/>
            <person name="Kevorkian J.-P."/>
            <person name="Zhang S."/>
            <person name="Vexiau P."/>
            <person name="German M.S."/>
            <person name="Vaisse C."/>
        </authorList>
    </citation>
    <scope>INVOLVEMENT IN KPD</scope>
    <scope>VARIANTS KPD TRP-45 AND TRP-141</scope>
</reference>
<reference key="8">
    <citation type="journal article" date="2005" name="Diabetologia">
        <title>Association of childhood type 1 diabetes mellitus with a variant of PAX4: possible link to beta cell regenerative capacity.</title>
        <authorList>
            <person name="Biason-Lauber A."/>
            <person name="Boehm B."/>
            <person name="Lang-Muritano M."/>
            <person name="Gauthier B.R."/>
            <person name="Brun T."/>
            <person name="Wollheim C.B."/>
            <person name="Schoenle E.J."/>
        </authorList>
    </citation>
    <scope>VARIANT PRO-321 (ISOFORM 3)</scope>
</reference>
<reference key="9">
    <citation type="journal article" date="2007" name="J. Clin. Endocrinol. Metab.">
        <title>PAX4 mutations in Thais with maturity onset diabetes of the young.</title>
        <authorList>
            <person name="Plengvidhya N."/>
            <person name="Kooptiwut S."/>
            <person name="Songtawee N."/>
            <person name="Doi A."/>
            <person name="Furuta H."/>
            <person name="Nishi M."/>
            <person name="Nanjo K."/>
            <person name="Tantibhedhyangkul W."/>
            <person name="Boonyasrisawat W."/>
            <person name="Yenchitsomanus P.-T."/>
            <person name="Doria A."/>
            <person name="Banchuin N."/>
        </authorList>
    </citation>
    <scope>VARIANT MODY9 TRP-172</scope>
    <scope>VARIANTS GLN-39; CYS-191; HIS-200 AND SER-200</scope>
    <scope>VARIANT PRO-321 (ISOFORM 3)</scope>
    <scope>CHARACTERIZATION OF VARIANT MODY9 TRP-172</scope>
</reference>
<sequence length="350" mass="37833">MHQDGISSMNQLGGLFVNGRPLPLDTRQQIVRLAVSGMRPCDISRILKVSNGCVSKILGRYYRTGVLEPKGIGGSKPRLATPPVVARIAQLKGECPALFAWEIQRQLCAEGLCTQDKTPSVSSINRVLRALQEDQGLPCTRLRSPAVLAPAVLTPHSGSETPRGTHPGTGHRNRTIFSPSQAEALEKEFQRGQYPDSVARGKLATATSLPEDTVRVWFSNRRAKWRRQEKLKWEMQLPGASQGLTVPRVAPGIISAQQSPGSVPTAALPALEPLGPSCYQLCWATAPERCLSDTPPKACLKPCWDCGSFLLPVIAPSCVDVAWPCLDASLAHHLIGGAGKATPTHFSHWP</sequence>
<accession>O43316</accession>
<accession>O95161</accession>
<accession>Q6B0H0</accession>
<name>PAX4_HUMAN</name>
<dbReference type="EMBL" id="AB008913">
    <property type="protein sequence ID" value="BAA24506.1"/>
    <property type="molecule type" value="mRNA"/>
</dbReference>
<dbReference type="EMBL" id="AF043978">
    <property type="protein sequence ID" value="AAD02289.1"/>
    <property type="molecule type" value="mRNA"/>
</dbReference>
<dbReference type="EMBL" id="AC073934">
    <property type="status" value="NOT_ANNOTATED_CDS"/>
    <property type="molecule type" value="Genomic_DNA"/>
</dbReference>
<dbReference type="EMBL" id="BC074761">
    <property type="protein sequence ID" value="AAH74761.1"/>
    <property type="molecule type" value="mRNA"/>
</dbReference>
<dbReference type="RefSeq" id="NP_006184.2">
    <property type="nucleotide sequence ID" value="NM_006193.2"/>
</dbReference>
<dbReference type="SMR" id="O43316"/>
<dbReference type="BioGRID" id="111112">
    <property type="interactions" value="17"/>
</dbReference>
<dbReference type="FunCoup" id="O43316">
    <property type="interactions" value="207"/>
</dbReference>
<dbReference type="IntAct" id="O43316">
    <property type="interactions" value="3"/>
</dbReference>
<dbReference type="STRING" id="9606.ENSP00000368014"/>
<dbReference type="GlyGen" id="O43316">
    <property type="glycosylation" value="1 site, 1 O-linked glycan (1 site)"/>
</dbReference>
<dbReference type="iPTMnet" id="O43316"/>
<dbReference type="PhosphoSitePlus" id="O43316"/>
<dbReference type="BioMuta" id="PAX4"/>
<dbReference type="MassIVE" id="O43316"/>
<dbReference type="PaxDb" id="9606-ENSP00000339906"/>
<dbReference type="ProteomicsDB" id="48895">
    <molecule id="O43316-1"/>
</dbReference>
<dbReference type="ProteomicsDB" id="48897">
    <molecule id="O43316-4"/>
</dbReference>
<dbReference type="Antibodypedia" id="1766">
    <property type="antibodies" value="362 antibodies from 36 providers"/>
</dbReference>
<dbReference type="DNASU" id="5078"/>
<dbReference type="Ensembl" id="ENST00000341640.6">
    <molecule id="O43316-4"/>
    <property type="protein sequence ID" value="ENSP00000339906.2"/>
    <property type="gene ID" value="ENSG00000106331.19"/>
</dbReference>
<dbReference type="UCSC" id="uc010lld.1">
    <molecule id="O43316-1"/>
    <property type="organism name" value="human"/>
</dbReference>
<dbReference type="AGR" id="HGNC:8618"/>
<dbReference type="GeneCards" id="PAX4"/>
<dbReference type="GeneReviews" id="PAX4"/>
<dbReference type="HGNC" id="HGNC:8618">
    <property type="gene designation" value="PAX4"/>
</dbReference>
<dbReference type="HPA" id="ENSG00000106331">
    <property type="expression patterns" value="Not detected"/>
</dbReference>
<dbReference type="MalaCards" id="PAX4"/>
<dbReference type="MIM" id="125853">
    <property type="type" value="phenotype"/>
</dbReference>
<dbReference type="MIM" id="167413">
    <property type="type" value="gene"/>
</dbReference>
<dbReference type="MIM" id="612225">
    <property type="type" value="phenotype"/>
</dbReference>
<dbReference type="MIM" id="612227">
    <property type="type" value="phenotype"/>
</dbReference>
<dbReference type="neXtProt" id="NX_O43316"/>
<dbReference type="OpenTargets" id="ENSG00000106331"/>
<dbReference type="Orphanet" id="552">
    <property type="disease" value="MODY"/>
</dbReference>
<dbReference type="PharmGKB" id="PA32958"/>
<dbReference type="VEuPathDB" id="HostDB:ENSG00000106331"/>
<dbReference type="eggNOG" id="KOG0849">
    <property type="taxonomic scope" value="Eukaryota"/>
</dbReference>
<dbReference type="GeneTree" id="ENSGT00940000161709"/>
<dbReference type="HOGENOM" id="CLU_019281_1_2_1"/>
<dbReference type="InParanoid" id="O43316"/>
<dbReference type="OrthoDB" id="3225452at2759"/>
<dbReference type="PAN-GO" id="O43316">
    <property type="GO annotations" value="4 GO annotations based on evolutionary models"/>
</dbReference>
<dbReference type="PhylomeDB" id="O43316"/>
<dbReference type="TreeFam" id="TF320146"/>
<dbReference type="PathwayCommons" id="O43316"/>
<dbReference type="Reactome" id="R-HSA-210746">
    <property type="pathway name" value="Regulation of gene expression in endocrine-committed (NEUROG3+) progenitor cells"/>
</dbReference>
<dbReference type="SignaLink" id="O43316"/>
<dbReference type="BioGRID-ORCS" id="5078">
    <property type="hits" value="8 hits in 1164 CRISPR screens"/>
</dbReference>
<dbReference type="ChiTaRS" id="PAX4">
    <property type="organism name" value="human"/>
</dbReference>
<dbReference type="GeneWiki" id="PAX4"/>
<dbReference type="GenomeRNAi" id="5078"/>
<dbReference type="Pharos" id="O43316">
    <property type="development level" value="Tbio"/>
</dbReference>
<dbReference type="PRO" id="PR:O43316"/>
<dbReference type="Proteomes" id="UP000005640">
    <property type="component" value="Chromosome 7"/>
</dbReference>
<dbReference type="RNAct" id="O43316">
    <property type="molecule type" value="protein"/>
</dbReference>
<dbReference type="Bgee" id="ENSG00000106331">
    <property type="expression patterns" value="Expressed in male germ line stem cell (sensu Vertebrata) in testis and 20 other cell types or tissues"/>
</dbReference>
<dbReference type="ExpressionAtlas" id="O43316">
    <property type="expression patterns" value="baseline and differential"/>
</dbReference>
<dbReference type="GO" id="GO:0000785">
    <property type="term" value="C:chromatin"/>
    <property type="evidence" value="ECO:0000247"/>
    <property type="project" value="NTNU_SB"/>
</dbReference>
<dbReference type="GO" id="GO:0005654">
    <property type="term" value="C:nucleoplasm"/>
    <property type="evidence" value="ECO:0000304"/>
    <property type="project" value="Reactome"/>
</dbReference>
<dbReference type="GO" id="GO:0003677">
    <property type="term" value="F:DNA binding"/>
    <property type="evidence" value="ECO:0000304"/>
    <property type="project" value="ProtInc"/>
</dbReference>
<dbReference type="GO" id="GO:0000981">
    <property type="term" value="F:DNA-binding transcription factor activity, RNA polymerase II-specific"/>
    <property type="evidence" value="ECO:0000247"/>
    <property type="project" value="NTNU_SB"/>
</dbReference>
<dbReference type="GO" id="GO:0000978">
    <property type="term" value="F:RNA polymerase II cis-regulatory region sequence-specific DNA binding"/>
    <property type="evidence" value="ECO:0000318"/>
    <property type="project" value="GO_Central"/>
</dbReference>
<dbReference type="GO" id="GO:1990837">
    <property type="term" value="F:sequence-specific double-stranded DNA binding"/>
    <property type="evidence" value="ECO:0000314"/>
    <property type="project" value="ARUK-UCL"/>
</dbReference>
<dbReference type="GO" id="GO:0009887">
    <property type="term" value="P:animal organ morphogenesis"/>
    <property type="evidence" value="ECO:0000304"/>
    <property type="project" value="ProtInc"/>
</dbReference>
<dbReference type="GO" id="GO:0007420">
    <property type="term" value="P:brain development"/>
    <property type="evidence" value="ECO:0000318"/>
    <property type="project" value="GO_Central"/>
</dbReference>
<dbReference type="GO" id="GO:0030900">
    <property type="term" value="P:forebrain development"/>
    <property type="evidence" value="ECO:0000318"/>
    <property type="project" value="GO_Central"/>
</dbReference>
<dbReference type="GO" id="GO:0006357">
    <property type="term" value="P:regulation of transcription by RNA polymerase II"/>
    <property type="evidence" value="ECO:0000318"/>
    <property type="project" value="GO_Central"/>
</dbReference>
<dbReference type="GO" id="GO:0060041">
    <property type="term" value="P:retina development in camera-type eye"/>
    <property type="evidence" value="ECO:0000318"/>
    <property type="project" value="GO_Central"/>
</dbReference>
<dbReference type="GO" id="GO:0007423">
    <property type="term" value="P:sensory organ development"/>
    <property type="evidence" value="ECO:0000318"/>
    <property type="project" value="GO_Central"/>
</dbReference>
<dbReference type="GO" id="GO:0003309">
    <property type="term" value="P:type B pancreatic cell differentiation"/>
    <property type="evidence" value="ECO:0000318"/>
    <property type="project" value="GO_Central"/>
</dbReference>
<dbReference type="CDD" id="cd00086">
    <property type="entry name" value="homeodomain"/>
    <property type="match status" value="1"/>
</dbReference>
<dbReference type="FunFam" id="1.10.10.60:FF:000226">
    <property type="entry name" value="Paired box gene 4"/>
    <property type="match status" value="1"/>
</dbReference>
<dbReference type="FunFam" id="1.10.10.10:FF:000003">
    <property type="entry name" value="Paired box protein Pax-6"/>
    <property type="match status" value="1"/>
</dbReference>
<dbReference type="FunFam" id="1.10.10.10:FF:000069">
    <property type="entry name" value="Paired box protein Pax-6"/>
    <property type="match status" value="1"/>
</dbReference>
<dbReference type="Gene3D" id="1.10.10.60">
    <property type="entry name" value="Homeodomain-like"/>
    <property type="match status" value="1"/>
</dbReference>
<dbReference type="Gene3D" id="1.10.10.10">
    <property type="entry name" value="Winged helix-like DNA-binding domain superfamily/Winged helix DNA-binding domain"/>
    <property type="match status" value="2"/>
</dbReference>
<dbReference type="InterPro" id="IPR001356">
    <property type="entry name" value="HD"/>
</dbReference>
<dbReference type="InterPro" id="IPR017970">
    <property type="entry name" value="Homeobox_CS"/>
</dbReference>
<dbReference type="InterPro" id="IPR009057">
    <property type="entry name" value="Homeodomain-like_sf"/>
</dbReference>
<dbReference type="InterPro" id="IPR043182">
    <property type="entry name" value="PAIRED_DNA-bd_dom"/>
</dbReference>
<dbReference type="InterPro" id="IPR001523">
    <property type="entry name" value="Paired_dom"/>
</dbReference>
<dbReference type="InterPro" id="IPR043565">
    <property type="entry name" value="PAX_fam"/>
</dbReference>
<dbReference type="InterPro" id="IPR036388">
    <property type="entry name" value="WH-like_DNA-bd_sf"/>
</dbReference>
<dbReference type="PANTHER" id="PTHR45636:SF8">
    <property type="entry name" value="PAIRED BOX PROTEIN PAX-4"/>
    <property type="match status" value="1"/>
</dbReference>
<dbReference type="PANTHER" id="PTHR45636">
    <property type="entry name" value="PAIRED BOX PROTEIN PAX-6-RELATED-RELATED"/>
    <property type="match status" value="1"/>
</dbReference>
<dbReference type="Pfam" id="PF00046">
    <property type="entry name" value="Homeodomain"/>
    <property type="match status" value="1"/>
</dbReference>
<dbReference type="Pfam" id="PF00292">
    <property type="entry name" value="PAX"/>
    <property type="match status" value="1"/>
</dbReference>
<dbReference type="PRINTS" id="PR00027">
    <property type="entry name" value="PAIREDBOX"/>
</dbReference>
<dbReference type="SMART" id="SM00389">
    <property type="entry name" value="HOX"/>
    <property type="match status" value="1"/>
</dbReference>
<dbReference type="SMART" id="SM00351">
    <property type="entry name" value="PAX"/>
    <property type="match status" value="1"/>
</dbReference>
<dbReference type="SUPFAM" id="SSF46689">
    <property type="entry name" value="Homeodomain-like"/>
    <property type="match status" value="2"/>
</dbReference>
<dbReference type="PROSITE" id="PS00027">
    <property type="entry name" value="HOMEOBOX_1"/>
    <property type="match status" value="1"/>
</dbReference>
<dbReference type="PROSITE" id="PS50071">
    <property type="entry name" value="HOMEOBOX_2"/>
    <property type="match status" value="1"/>
</dbReference>
<dbReference type="PROSITE" id="PS00034">
    <property type="entry name" value="PAIRED_1"/>
    <property type="match status" value="1"/>
</dbReference>
<dbReference type="PROSITE" id="PS51057">
    <property type="entry name" value="PAIRED_2"/>
    <property type="match status" value="1"/>
</dbReference>
<comment type="function">
    <text>Plays an important role in the differentiation and development of pancreatic islet beta cells. Transcriptional repressor that binds to a common element in the glucagon, insulin and somatostatin promoters. Competes with PAX6 for this same promoter binding site. Isoform 2 appears to be a dominant negative form antagonizing PAX4 transcriptional activity.</text>
</comment>
<comment type="subcellular location">
    <subcellularLocation>
        <location>Nucleus</location>
    </subcellularLocation>
</comment>
<comment type="alternative products">
    <event type="alternative splicing"/>
    <isoform>
        <id>O43316-1</id>
        <name>1</name>
        <name>Pax4</name>
        <sequence type="displayed"/>
    </isoform>
    <isoform>
        <id>O43316-2</id>
        <name>2</name>
        <name>Pax4V</name>
        <sequence type="described" ref="VSP_002359 VSP_002360"/>
    </isoform>
    <isoform>
        <id>O43316-4</id>
        <name>3</name>
        <sequence type="described" ref="VSP_036448 VSP_036449"/>
    </isoform>
</comment>
<comment type="disease" evidence="4">
    <disease id="DI-02060">
        <name>Type 2 diabetes mellitus</name>
        <acronym>T2D</acronym>
        <description>A multifactorial disorder of glucose homeostasis caused by a lack of sensitivity to insulin. Affected individuals usually have an obese body habitus and manifestations of a metabolic syndrome characterized by diabetes, insulin resistance, hypertension and hypertriglyceridemia. The disease results in long-term complications that affect the eyes, kidneys, nerves, and blood vessels.</description>
        <dbReference type="MIM" id="125853"/>
    </disease>
    <text>Disease susceptibility may be associated with variants affecting the gene represented in this entry.</text>
</comment>
<comment type="disease" evidence="5">
    <disease id="DI-02784">
        <name>Diabetes mellitus, ketosis-prone</name>
        <acronym>KPD</acronym>
        <description>An atypical form of diabetes mellitus characterized by an acute initial presentation with severe hyperglycemia and ketosis, as seen in classic type 1 diabetes, but after initiation of insulin therapy, prolonged remission is often possible with cessation of insulin therapy and maintenance of appropriate metabolic control. Metabolic studies show a markedly blunted insulin secretory response to glucose, partially reversible with the improvement of blood glucose control. Variable levels of insulin resistance are observed, especially in obese patients. Pancreatic beta-cell autoimmunity is a rare finding.</description>
        <dbReference type="MIM" id="612227"/>
    </disease>
    <text>Disease susceptibility is associated with variants affecting the gene represented in this entry.</text>
</comment>
<comment type="disease" evidence="7">
    <disease id="DI-01950">
        <name>Maturity-onset diabetes of the young 9</name>
        <acronym>MODY9</acronym>
        <description>A form of diabetes that is characterized by an autosomal dominant mode of inheritance, onset in childhood or early adulthood (usually before 25 years of age), a primary defect in insulin secretion and frequent insulin-independence at the beginning of the disease.</description>
        <dbReference type="MIM" id="612225"/>
    </disease>
    <text>The disease is caused by variants affecting the gene represented in this entry.</text>
</comment>
<comment type="similarity">
    <text evidence="10">Belongs to the paired homeobox family.</text>
</comment>
<comment type="sequence caution" evidence="10">
    <conflict type="miscellaneous discrepancy">
        <sequence resource="EMBL" id="AC073934"/>
    </conflict>
    <text>According to the human genome assembly there is a stop codon in position 349.</text>
</comment>
<protein>
    <recommendedName>
        <fullName>Paired box protein Pax-4</fullName>
    </recommendedName>
</protein>
<gene>
    <name type="primary">PAX4</name>
</gene>